<organism>
    <name type="scientific">Campylobacter jejuni subsp. jejuni serotype O:2 (strain ATCC 700819 / NCTC 11168)</name>
    <dbReference type="NCBI Taxonomy" id="192222"/>
    <lineage>
        <taxon>Bacteria</taxon>
        <taxon>Pseudomonadati</taxon>
        <taxon>Campylobacterota</taxon>
        <taxon>Epsilonproteobacteria</taxon>
        <taxon>Campylobacterales</taxon>
        <taxon>Campylobacteraceae</taxon>
        <taxon>Campylobacter</taxon>
    </lineage>
</organism>
<protein>
    <recommendedName>
        <fullName evidence="1">CTP synthase</fullName>
        <ecNumber evidence="1">6.3.4.2</ecNumber>
    </recommendedName>
    <alternativeName>
        <fullName evidence="1">Cytidine 5'-triphosphate synthase</fullName>
    </alternativeName>
    <alternativeName>
        <fullName evidence="1">Cytidine triphosphate synthetase</fullName>
        <shortName evidence="1">CTP synthetase</shortName>
        <shortName evidence="1">CTPS</shortName>
    </alternativeName>
    <alternativeName>
        <fullName evidence="1">UTP--ammonia ligase</fullName>
    </alternativeName>
</protein>
<proteinExistence type="inferred from homology"/>
<comment type="function">
    <text evidence="1">Catalyzes the ATP-dependent amination of UTP to CTP with either L-glutamine or ammonia as the source of nitrogen. Regulates intracellular CTP levels through interactions with the four ribonucleotide triphosphates.</text>
</comment>
<comment type="catalytic activity">
    <reaction evidence="1">
        <text>UTP + L-glutamine + ATP + H2O = CTP + L-glutamate + ADP + phosphate + 2 H(+)</text>
        <dbReference type="Rhea" id="RHEA:26426"/>
        <dbReference type="ChEBI" id="CHEBI:15377"/>
        <dbReference type="ChEBI" id="CHEBI:15378"/>
        <dbReference type="ChEBI" id="CHEBI:29985"/>
        <dbReference type="ChEBI" id="CHEBI:30616"/>
        <dbReference type="ChEBI" id="CHEBI:37563"/>
        <dbReference type="ChEBI" id="CHEBI:43474"/>
        <dbReference type="ChEBI" id="CHEBI:46398"/>
        <dbReference type="ChEBI" id="CHEBI:58359"/>
        <dbReference type="ChEBI" id="CHEBI:456216"/>
        <dbReference type="EC" id="6.3.4.2"/>
    </reaction>
</comment>
<comment type="catalytic activity">
    <reaction evidence="1">
        <text>L-glutamine + H2O = L-glutamate + NH4(+)</text>
        <dbReference type="Rhea" id="RHEA:15889"/>
        <dbReference type="ChEBI" id="CHEBI:15377"/>
        <dbReference type="ChEBI" id="CHEBI:28938"/>
        <dbReference type="ChEBI" id="CHEBI:29985"/>
        <dbReference type="ChEBI" id="CHEBI:58359"/>
    </reaction>
</comment>
<comment type="catalytic activity">
    <reaction evidence="1">
        <text>UTP + NH4(+) + ATP = CTP + ADP + phosphate + 2 H(+)</text>
        <dbReference type="Rhea" id="RHEA:16597"/>
        <dbReference type="ChEBI" id="CHEBI:15378"/>
        <dbReference type="ChEBI" id="CHEBI:28938"/>
        <dbReference type="ChEBI" id="CHEBI:30616"/>
        <dbReference type="ChEBI" id="CHEBI:37563"/>
        <dbReference type="ChEBI" id="CHEBI:43474"/>
        <dbReference type="ChEBI" id="CHEBI:46398"/>
        <dbReference type="ChEBI" id="CHEBI:456216"/>
    </reaction>
</comment>
<comment type="activity regulation">
    <text evidence="1">Allosterically activated by GTP, when glutamine is the substrate; GTP has no effect on the reaction when ammonia is the substrate. The allosteric effector GTP functions by stabilizing the protein conformation that binds the tetrahedral intermediate(s) formed during glutamine hydrolysis. Inhibited by the product CTP, via allosteric rather than competitive inhibition.</text>
</comment>
<comment type="pathway">
    <text evidence="1">Pyrimidine metabolism; CTP biosynthesis via de novo pathway; CTP from UDP: step 2/2.</text>
</comment>
<comment type="subunit">
    <text evidence="1">Homotetramer.</text>
</comment>
<comment type="miscellaneous">
    <text evidence="1">CTPSs have evolved a hybrid strategy for distinguishing between UTP and CTP. The overlapping regions of the product feedback inhibitory and substrate sites recognize a common feature in both compounds, the triphosphate moiety. To differentiate isosteric substrate and product pyrimidine rings, an additional pocket far from the expected kinase/ligase catalytic site, specifically recognizes the cytosine and ribose portions of the product inhibitor.</text>
</comment>
<comment type="similarity">
    <text evidence="1">Belongs to the CTP synthase family.</text>
</comment>
<name>PYRG_CAMJE</name>
<dbReference type="EC" id="6.3.4.2" evidence="1"/>
<dbReference type="EMBL" id="AL111168">
    <property type="protein sequence ID" value="CAL34208.1"/>
    <property type="molecule type" value="Genomic_DNA"/>
</dbReference>
<dbReference type="PIR" id="F81418">
    <property type="entry name" value="F81418"/>
</dbReference>
<dbReference type="RefSeq" id="WP_002853102.1">
    <property type="nucleotide sequence ID" value="NZ_SZUC01000002.1"/>
</dbReference>
<dbReference type="RefSeq" id="YP_002343499.1">
    <property type="nucleotide sequence ID" value="NC_002163.1"/>
</dbReference>
<dbReference type="SMR" id="Q9PJ84"/>
<dbReference type="IntAct" id="Q9PJ84">
    <property type="interactions" value="47"/>
</dbReference>
<dbReference type="STRING" id="192222.Cj0027"/>
<dbReference type="PaxDb" id="192222-Cj0027"/>
<dbReference type="EnsemblBacteria" id="CAL34208">
    <property type="protein sequence ID" value="CAL34208"/>
    <property type="gene ID" value="Cj0027"/>
</dbReference>
<dbReference type="GeneID" id="904367"/>
<dbReference type="KEGG" id="cje:Cj0027"/>
<dbReference type="PATRIC" id="fig|192222.6.peg.27"/>
<dbReference type="eggNOG" id="COG0504">
    <property type="taxonomic scope" value="Bacteria"/>
</dbReference>
<dbReference type="HOGENOM" id="CLU_011675_5_0_7"/>
<dbReference type="OrthoDB" id="9801107at2"/>
<dbReference type="UniPathway" id="UPA00159">
    <property type="reaction ID" value="UER00277"/>
</dbReference>
<dbReference type="Proteomes" id="UP000000799">
    <property type="component" value="Chromosome"/>
</dbReference>
<dbReference type="GO" id="GO:0005829">
    <property type="term" value="C:cytosol"/>
    <property type="evidence" value="ECO:0007669"/>
    <property type="project" value="TreeGrafter"/>
</dbReference>
<dbReference type="GO" id="GO:0005524">
    <property type="term" value="F:ATP binding"/>
    <property type="evidence" value="ECO:0007669"/>
    <property type="project" value="UniProtKB-KW"/>
</dbReference>
<dbReference type="GO" id="GO:0003883">
    <property type="term" value="F:CTP synthase activity"/>
    <property type="evidence" value="ECO:0007669"/>
    <property type="project" value="UniProtKB-UniRule"/>
</dbReference>
<dbReference type="GO" id="GO:0004359">
    <property type="term" value="F:glutaminase activity"/>
    <property type="evidence" value="ECO:0007669"/>
    <property type="project" value="RHEA"/>
</dbReference>
<dbReference type="GO" id="GO:0042802">
    <property type="term" value="F:identical protein binding"/>
    <property type="evidence" value="ECO:0007669"/>
    <property type="project" value="TreeGrafter"/>
</dbReference>
<dbReference type="GO" id="GO:0046872">
    <property type="term" value="F:metal ion binding"/>
    <property type="evidence" value="ECO:0007669"/>
    <property type="project" value="UniProtKB-KW"/>
</dbReference>
<dbReference type="GO" id="GO:0044210">
    <property type="term" value="P:'de novo' CTP biosynthetic process"/>
    <property type="evidence" value="ECO:0007669"/>
    <property type="project" value="UniProtKB-UniRule"/>
</dbReference>
<dbReference type="GO" id="GO:0019856">
    <property type="term" value="P:pyrimidine nucleobase biosynthetic process"/>
    <property type="evidence" value="ECO:0007669"/>
    <property type="project" value="TreeGrafter"/>
</dbReference>
<dbReference type="CDD" id="cd03113">
    <property type="entry name" value="CTPS_N"/>
    <property type="match status" value="1"/>
</dbReference>
<dbReference type="CDD" id="cd01746">
    <property type="entry name" value="GATase1_CTP_Synthase"/>
    <property type="match status" value="1"/>
</dbReference>
<dbReference type="FunFam" id="3.40.50.300:FF:000009">
    <property type="entry name" value="CTP synthase"/>
    <property type="match status" value="1"/>
</dbReference>
<dbReference type="FunFam" id="3.40.50.880:FF:000002">
    <property type="entry name" value="CTP synthase"/>
    <property type="match status" value="1"/>
</dbReference>
<dbReference type="Gene3D" id="3.40.50.880">
    <property type="match status" value="1"/>
</dbReference>
<dbReference type="Gene3D" id="3.40.50.300">
    <property type="entry name" value="P-loop containing nucleotide triphosphate hydrolases"/>
    <property type="match status" value="1"/>
</dbReference>
<dbReference type="HAMAP" id="MF_01227">
    <property type="entry name" value="PyrG"/>
    <property type="match status" value="1"/>
</dbReference>
<dbReference type="InterPro" id="IPR029062">
    <property type="entry name" value="Class_I_gatase-like"/>
</dbReference>
<dbReference type="InterPro" id="IPR004468">
    <property type="entry name" value="CTP_synthase"/>
</dbReference>
<dbReference type="InterPro" id="IPR017456">
    <property type="entry name" value="CTP_synthase_N"/>
</dbReference>
<dbReference type="InterPro" id="IPR017926">
    <property type="entry name" value="GATASE"/>
</dbReference>
<dbReference type="InterPro" id="IPR033828">
    <property type="entry name" value="GATase1_CTP_Synthase"/>
</dbReference>
<dbReference type="InterPro" id="IPR027417">
    <property type="entry name" value="P-loop_NTPase"/>
</dbReference>
<dbReference type="NCBIfam" id="NF003792">
    <property type="entry name" value="PRK05380.1"/>
    <property type="match status" value="1"/>
</dbReference>
<dbReference type="NCBIfam" id="TIGR00337">
    <property type="entry name" value="PyrG"/>
    <property type="match status" value="1"/>
</dbReference>
<dbReference type="PANTHER" id="PTHR11550">
    <property type="entry name" value="CTP SYNTHASE"/>
    <property type="match status" value="1"/>
</dbReference>
<dbReference type="PANTHER" id="PTHR11550:SF0">
    <property type="entry name" value="CTP SYNTHASE-RELATED"/>
    <property type="match status" value="1"/>
</dbReference>
<dbReference type="Pfam" id="PF06418">
    <property type="entry name" value="CTP_synth_N"/>
    <property type="match status" value="1"/>
</dbReference>
<dbReference type="Pfam" id="PF00117">
    <property type="entry name" value="GATase"/>
    <property type="match status" value="1"/>
</dbReference>
<dbReference type="SUPFAM" id="SSF52317">
    <property type="entry name" value="Class I glutamine amidotransferase-like"/>
    <property type="match status" value="1"/>
</dbReference>
<dbReference type="SUPFAM" id="SSF52540">
    <property type="entry name" value="P-loop containing nucleoside triphosphate hydrolases"/>
    <property type="match status" value="1"/>
</dbReference>
<dbReference type="PROSITE" id="PS51273">
    <property type="entry name" value="GATASE_TYPE_1"/>
    <property type="match status" value="1"/>
</dbReference>
<evidence type="ECO:0000255" key="1">
    <source>
        <dbReference type="HAMAP-Rule" id="MF_01227"/>
    </source>
</evidence>
<keyword id="KW-0067">ATP-binding</keyword>
<keyword id="KW-0315">Glutamine amidotransferase</keyword>
<keyword id="KW-0436">Ligase</keyword>
<keyword id="KW-0460">Magnesium</keyword>
<keyword id="KW-0479">Metal-binding</keyword>
<keyword id="KW-0547">Nucleotide-binding</keyword>
<keyword id="KW-0665">Pyrimidine biosynthesis</keyword>
<keyword id="KW-1185">Reference proteome</keyword>
<reference key="1">
    <citation type="journal article" date="2000" name="Nature">
        <title>The genome sequence of the food-borne pathogen Campylobacter jejuni reveals hypervariable sequences.</title>
        <authorList>
            <person name="Parkhill J."/>
            <person name="Wren B.W."/>
            <person name="Mungall K.L."/>
            <person name="Ketley J.M."/>
            <person name="Churcher C.M."/>
            <person name="Basham D."/>
            <person name="Chillingworth T."/>
            <person name="Davies R.M."/>
            <person name="Feltwell T."/>
            <person name="Holroyd S."/>
            <person name="Jagels K."/>
            <person name="Karlyshev A.V."/>
            <person name="Moule S."/>
            <person name="Pallen M.J."/>
            <person name="Penn C.W."/>
            <person name="Quail M.A."/>
            <person name="Rajandream M.A."/>
            <person name="Rutherford K.M."/>
            <person name="van Vliet A.H.M."/>
            <person name="Whitehead S."/>
            <person name="Barrell B.G."/>
        </authorList>
    </citation>
    <scope>NUCLEOTIDE SEQUENCE [LARGE SCALE GENOMIC DNA]</scope>
    <source>
        <strain>ATCC 700819 / NCTC 11168</strain>
    </source>
</reference>
<gene>
    <name evidence="1" type="primary">pyrG</name>
    <name type="ordered locus">Cj0027</name>
</gene>
<accession>Q9PJ84</accession>
<accession>Q0PC98</accession>
<feature type="chain" id="PRO_0000138172" description="CTP synthase">
    <location>
        <begin position="1"/>
        <end position="543"/>
    </location>
</feature>
<feature type="domain" description="Glutamine amidotransferase type-1" evidence="1">
    <location>
        <begin position="292"/>
        <end position="543"/>
    </location>
</feature>
<feature type="region of interest" description="Amidoligase domain" evidence="1">
    <location>
        <begin position="1"/>
        <end position="267"/>
    </location>
</feature>
<feature type="active site" description="Nucleophile; for glutamine hydrolysis" evidence="1">
    <location>
        <position position="381"/>
    </location>
</feature>
<feature type="active site" evidence="1">
    <location>
        <position position="516"/>
    </location>
</feature>
<feature type="active site" evidence="1">
    <location>
        <position position="518"/>
    </location>
</feature>
<feature type="binding site" evidence="1">
    <location>
        <position position="15"/>
    </location>
    <ligand>
        <name>CTP</name>
        <dbReference type="ChEBI" id="CHEBI:37563"/>
        <note>allosteric inhibitor</note>
    </ligand>
</feature>
<feature type="binding site" evidence="1">
    <location>
        <position position="15"/>
    </location>
    <ligand>
        <name>UTP</name>
        <dbReference type="ChEBI" id="CHEBI:46398"/>
    </ligand>
</feature>
<feature type="binding site" evidence="1">
    <location>
        <begin position="16"/>
        <end position="21"/>
    </location>
    <ligand>
        <name>ATP</name>
        <dbReference type="ChEBI" id="CHEBI:30616"/>
    </ligand>
</feature>
<feature type="binding site" evidence="1">
    <location>
        <position position="73"/>
    </location>
    <ligand>
        <name>ATP</name>
        <dbReference type="ChEBI" id="CHEBI:30616"/>
    </ligand>
</feature>
<feature type="binding site" evidence="1">
    <location>
        <position position="73"/>
    </location>
    <ligand>
        <name>Mg(2+)</name>
        <dbReference type="ChEBI" id="CHEBI:18420"/>
    </ligand>
</feature>
<feature type="binding site" evidence="1">
    <location>
        <position position="141"/>
    </location>
    <ligand>
        <name>Mg(2+)</name>
        <dbReference type="ChEBI" id="CHEBI:18420"/>
    </ligand>
</feature>
<feature type="binding site" evidence="1">
    <location>
        <begin position="148"/>
        <end position="150"/>
    </location>
    <ligand>
        <name>CTP</name>
        <dbReference type="ChEBI" id="CHEBI:37563"/>
        <note>allosteric inhibitor</note>
    </ligand>
</feature>
<feature type="binding site" evidence="1">
    <location>
        <begin position="188"/>
        <end position="193"/>
    </location>
    <ligand>
        <name>CTP</name>
        <dbReference type="ChEBI" id="CHEBI:37563"/>
        <note>allosteric inhibitor</note>
    </ligand>
</feature>
<feature type="binding site" evidence="1">
    <location>
        <begin position="188"/>
        <end position="193"/>
    </location>
    <ligand>
        <name>UTP</name>
        <dbReference type="ChEBI" id="CHEBI:46398"/>
    </ligand>
</feature>
<feature type="binding site" evidence="1">
    <location>
        <position position="224"/>
    </location>
    <ligand>
        <name>CTP</name>
        <dbReference type="ChEBI" id="CHEBI:37563"/>
        <note>allosteric inhibitor</note>
    </ligand>
</feature>
<feature type="binding site" evidence="1">
    <location>
        <position position="224"/>
    </location>
    <ligand>
        <name>UTP</name>
        <dbReference type="ChEBI" id="CHEBI:46398"/>
    </ligand>
</feature>
<feature type="binding site" evidence="1">
    <location>
        <position position="354"/>
    </location>
    <ligand>
        <name>L-glutamine</name>
        <dbReference type="ChEBI" id="CHEBI:58359"/>
    </ligand>
</feature>
<feature type="binding site" evidence="1">
    <location>
        <begin position="382"/>
        <end position="385"/>
    </location>
    <ligand>
        <name>L-glutamine</name>
        <dbReference type="ChEBI" id="CHEBI:58359"/>
    </ligand>
</feature>
<feature type="binding site" evidence="1">
    <location>
        <position position="405"/>
    </location>
    <ligand>
        <name>L-glutamine</name>
        <dbReference type="ChEBI" id="CHEBI:58359"/>
    </ligand>
</feature>
<feature type="binding site" evidence="1">
    <location>
        <position position="473"/>
    </location>
    <ligand>
        <name>L-glutamine</name>
        <dbReference type="ChEBI" id="CHEBI:58359"/>
    </ligand>
</feature>
<sequence length="543" mass="60401">MKQTKYIFVTGGVLSSLGKGIAAASIATLLKNSGLKVSILKADPYINVDPGTMSPFEHGEVFVTDDGAETDLDLGHYERFLDESLSQDNNFTTGRVYQSVIEKERRGEYLGKTIQVIPHIVGEIKDRIKKAGEGKDILIVEIGGTVGDIEGLPFLEAIRALRLEVGKNNAMNIHLTLVPFIKAAGELKTKPTQHSVGELRRIGISPDMIICRSEKALDRDLKDKIAISCGVEKNCVIESVDAASIYQIPLNFLKQDILSPIAEILDLKNLKPNMENWDSLVKRVIAPSNEVKIAFVGKYVDLKESYKSLTEAIIHAGAALDTKVELKWVDSEKLENMESSEVFKDVSGILVAGGFGYRGVEGKIKAIQYARENKIPFLGICLGMQLALVEFARNVLKLKDVNSSEFNEKCQNPVVYLIDEFMDTNGEKQIRTAKTPLGGTMRLGAYKCDIKEKSLLAKVYNEVKSVKERHRHRYEANPKYRADFEKYGLIVSGESKGLIEAVELNCHPFFLAVQFHPEFTSRLEHVNPVICSFIKAAINYEDN</sequence>